<name>DGT1A_DEIRA</name>
<sequence>MFTRADLEAREAALLPPFARRSSEARRAVPEAPSETRTAYQKDRDRVLHTKAFRRLEAKTQVFLNAPALGDHYRTRLTHTLEVQQVARTAALSLGLNETLAETVALAHDLGHPPFGHAGERLLDSLMRGHGETFDHNSQARRIVTLLEERSGEQPGLNLTLDTLDGLNKHGRAALPPTQRQPSLEAQVVDAADALAYTAHDLDDGLRSGLLHPEDLLELPLWRELQERSGVTSQRPSSADLRTLQRELLGWLIGDLTRSSDAAIAASGVASPDAVQAHAHRLVTYSPALRGHLRGAGDFLRERLYRHWQVEREVYQAEQVLTELFGAFLTRPALLPPRPRSRVGRDGLPRAICDHLAGMTDRYALETHAALRG</sequence>
<reference key="1">
    <citation type="journal article" date="1999" name="Science">
        <title>Genome sequence of the radioresistant bacterium Deinococcus radiodurans R1.</title>
        <authorList>
            <person name="White O."/>
            <person name="Eisen J.A."/>
            <person name="Heidelberg J.F."/>
            <person name="Hickey E.K."/>
            <person name="Peterson J.D."/>
            <person name="Dodson R.J."/>
            <person name="Haft D.H."/>
            <person name="Gwinn M.L."/>
            <person name="Nelson W.C."/>
            <person name="Richardson D.L."/>
            <person name="Moffat K.S."/>
            <person name="Qin H."/>
            <person name="Jiang L."/>
            <person name="Pamphile W."/>
            <person name="Crosby M."/>
            <person name="Shen M."/>
            <person name="Vamathevan J.J."/>
            <person name="Lam P."/>
            <person name="McDonald L.A."/>
            <person name="Utterback T.R."/>
            <person name="Zalewski C."/>
            <person name="Makarova K.S."/>
            <person name="Aravind L."/>
            <person name="Daly M.J."/>
            <person name="Minton K.W."/>
            <person name="Fleischmann R.D."/>
            <person name="Ketchum K.A."/>
            <person name="Nelson K.E."/>
            <person name="Salzberg S.L."/>
            <person name="Smith H.O."/>
            <person name="Venter J.C."/>
            <person name="Fraser C.M."/>
        </authorList>
    </citation>
    <scope>NUCLEOTIDE SEQUENCE [LARGE SCALE GENOMIC DNA]</scope>
    <source>
        <strain>ATCC 13939 / DSM 20539 / JCM 16871 / CCUG 27074 / LMG 4051 / NBRC 15346 / NCIMB 9279 / VKM B-1422 / R1</strain>
    </source>
</reference>
<evidence type="ECO:0000255" key="1">
    <source>
        <dbReference type="HAMAP-Rule" id="MF_01212"/>
    </source>
</evidence>
<evidence type="ECO:0000255" key="2">
    <source>
        <dbReference type="PROSITE-ProRule" id="PRU01175"/>
    </source>
</evidence>
<evidence type="ECO:0000256" key="3">
    <source>
        <dbReference type="SAM" id="MobiDB-lite"/>
    </source>
</evidence>
<dbReference type="EMBL" id="AE000513">
    <property type="protein sequence ID" value="AAF10581.1"/>
    <property type="molecule type" value="Genomic_DNA"/>
</dbReference>
<dbReference type="PIR" id="F75449">
    <property type="entry name" value="F75449"/>
</dbReference>
<dbReference type="RefSeq" id="NP_294730.1">
    <property type="nucleotide sequence ID" value="NC_001263.1"/>
</dbReference>
<dbReference type="RefSeq" id="WP_010887649.1">
    <property type="nucleotide sequence ID" value="NC_001263.1"/>
</dbReference>
<dbReference type="SMR" id="Q9RVM1"/>
<dbReference type="STRING" id="243230.DR_1006"/>
<dbReference type="PaxDb" id="243230-DR_1006"/>
<dbReference type="EnsemblBacteria" id="AAF10581">
    <property type="protein sequence ID" value="AAF10581"/>
    <property type="gene ID" value="DR_1006"/>
</dbReference>
<dbReference type="GeneID" id="69517252"/>
<dbReference type="KEGG" id="dra:DR_1006"/>
<dbReference type="PATRIC" id="fig|243230.17.peg.1195"/>
<dbReference type="eggNOG" id="COG0232">
    <property type="taxonomic scope" value="Bacteria"/>
</dbReference>
<dbReference type="HOGENOM" id="CLU_028163_1_0_0"/>
<dbReference type="InParanoid" id="Q9RVM1"/>
<dbReference type="OrthoDB" id="9803619at2"/>
<dbReference type="Proteomes" id="UP000002524">
    <property type="component" value="Chromosome 1"/>
</dbReference>
<dbReference type="GO" id="GO:0008832">
    <property type="term" value="F:dGTPase activity"/>
    <property type="evidence" value="ECO:0000318"/>
    <property type="project" value="GO_Central"/>
</dbReference>
<dbReference type="GO" id="GO:0006203">
    <property type="term" value="P:dGTP catabolic process"/>
    <property type="evidence" value="ECO:0000318"/>
    <property type="project" value="GO_Central"/>
</dbReference>
<dbReference type="CDD" id="cd00077">
    <property type="entry name" value="HDc"/>
    <property type="match status" value="1"/>
</dbReference>
<dbReference type="FunFam" id="1.10.3210.10:FF:000024">
    <property type="entry name" value="Deoxyguanosinetriphosphate triphosphohydrolase-like protein"/>
    <property type="match status" value="1"/>
</dbReference>
<dbReference type="Gene3D" id="1.10.3210.10">
    <property type="entry name" value="Hypothetical protein af1432"/>
    <property type="match status" value="1"/>
</dbReference>
<dbReference type="HAMAP" id="MF_01212">
    <property type="entry name" value="dGTPase_type2"/>
    <property type="match status" value="1"/>
</dbReference>
<dbReference type="InterPro" id="IPR006261">
    <property type="entry name" value="dGTPase"/>
</dbReference>
<dbReference type="InterPro" id="IPR050135">
    <property type="entry name" value="dGTPase-like"/>
</dbReference>
<dbReference type="InterPro" id="IPR023023">
    <property type="entry name" value="dNTPase_2"/>
</dbReference>
<dbReference type="InterPro" id="IPR003607">
    <property type="entry name" value="HD/PDEase_dom"/>
</dbReference>
<dbReference type="InterPro" id="IPR006674">
    <property type="entry name" value="HD_domain"/>
</dbReference>
<dbReference type="InterPro" id="IPR026875">
    <property type="entry name" value="PHydrolase_assoc_dom"/>
</dbReference>
<dbReference type="NCBIfam" id="TIGR01353">
    <property type="entry name" value="dGTP_triPase"/>
    <property type="match status" value="1"/>
</dbReference>
<dbReference type="PANTHER" id="PTHR11373:SF43">
    <property type="entry name" value="DEOXYGUANOSINETRIPHOSPHATE TRIPHOSPHOHYDROLASE-LIKE PROTEIN"/>
    <property type="match status" value="1"/>
</dbReference>
<dbReference type="PANTHER" id="PTHR11373">
    <property type="entry name" value="DEOXYNUCLEOSIDE TRIPHOSPHATE TRIPHOSPHOHYDROLASE"/>
    <property type="match status" value="1"/>
</dbReference>
<dbReference type="Pfam" id="PF01966">
    <property type="entry name" value="HD"/>
    <property type="match status" value="1"/>
</dbReference>
<dbReference type="Pfam" id="PF13286">
    <property type="entry name" value="HD_assoc"/>
    <property type="match status" value="1"/>
</dbReference>
<dbReference type="SMART" id="SM00471">
    <property type="entry name" value="HDc"/>
    <property type="match status" value="1"/>
</dbReference>
<dbReference type="SUPFAM" id="SSF109604">
    <property type="entry name" value="HD-domain/PDEase-like"/>
    <property type="match status" value="1"/>
</dbReference>
<dbReference type="PROSITE" id="PS51831">
    <property type="entry name" value="HD"/>
    <property type="match status" value="1"/>
</dbReference>
<accession>Q9RVM1</accession>
<comment type="similarity">
    <text evidence="1">Belongs to the dGTPase family. Type 2 subfamily.</text>
</comment>
<organism>
    <name type="scientific">Deinococcus radiodurans (strain ATCC 13939 / DSM 20539 / JCM 16871 / CCUG 27074 / LMG 4051 / NBRC 15346 / NCIMB 9279 / VKM B-1422 / R1)</name>
    <dbReference type="NCBI Taxonomy" id="243230"/>
    <lineage>
        <taxon>Bacteria</taxon>
        <taxon>Thermotogati</taxon>
        <taxon>Deinococcota</taxon>
        <taxon>Deinococci</taxon>
        <taxon>Deinococcales</taxon>
        <taxon>Deinococcaceae</taxon>
        <taxon>Deinococcus</taxon>
    </lineage>
</organism>
<gene>
    <name type="ordered locus">DR_1006</name>
</gene>
<feature type="chain" id="PRO_0000205303" description="Deoxyguanosinetriphosphate triphosphohydrolase-like protein 1">
    <location>
        <begin position="1"/>
        <end position="373"/>
    </location>
</feature>
<feature type="domain" description="HD" evidence="2">
    <location>
        <begin position="76"/>
        <end position="198"/>
    </location>
</feature>
<feature type="region of interest" description="Disordered" evidence="3">
    <location>
        <begin position="21"/>
        <end position="43"/>
    </location>
</feature>
<proteinExistence type="inferred from homology"/>
<protein>
    <recommendedName>
        <fullName evidence="1">Deoxyguanosinetriphosphate triphosphohydrolase-like protein 1</fullName>
    </recommendedName>
</protein>
<keyword id="KW-0378">Hydrolase</keyword>
<keyword id="KW-1185">Reference proteome</keyword>